<accession>Q8D233</accession>
<organism>
    <name type="scientific">Wigglesworthia glossinidia brevipalpis</name>
    <dbReference type="NCBI Taxonomy" id="36870"/>
    <lineage>
        <taxon>Bacteria</taxon>
        <taxon>Pseudomonadati</taxon>
        <taxon>Pseudomonadota</taxon>
        <taxon>Gammaproteobacteria</taxon>
        <taxon>Enterobacterales</taxon>
        <taxon>Erwiniaceae</taxon>
        <taxon>Wigglesworthia</taxon>
    </lineage>
</organism>
<proteinExistence type="inferred from homology"/>
<keyword id="KW-0240">DNA-directed RNA polymerase</keyword>
<keyword id="KW-0548">Nucleotidyltransferase</keyword>
<keyword id="KW-1185">Reference proteome</keyword>
<keyword id="KW-0804">Transcription</keyword>
<keyword id="KW-0808">Transferase</keyword>
<name>RPOB_WIGBR</name>
<evidence type="ECO:0000255" key="1">
    <source>
        <dbReference type="HAMAP-Rule" id="MF_01321"/>
    </source>
</evidence>
<reference key="1">
    <citation type="journal article" date="2002" name="Nat. Genet.">
        <title>Genome sequence of the endocellular obligate symbiont of tsetse flies, Wigglesworthia glossinidia.</title>
        <authorList>
            <person name="Akman L."/>
            <person name="Yamashita A."/>
            <person name="Watanabe H."/>
            <person name="Oshima K."/>
            <person name="Shiba T."/>
            <person name="Hattori M."/>
            <person name="Aksoy S."/>
        </authorList>
    </citation>
    <scope>NUCLEOTIDE SEQUENCE [LARGE SCALE GENOMIC DNA]</scope>
</reference>
<feature type="chain" id="PRO_0000047996" description="DNA-directed RNA polymerase subunit beta">
    <location>
        <begin position="1"/>
        <end position="1342"/>
    </location>
</feature>
<dbReference type="EC" id="2.7.7.6" evidence="1"/>
<dbReference type="EMBL" id="BA000021">
    <property type="protein sequence ID" value="BAC24668.1"/>
    <property type="molecule type" value="Genomic_DNA"/>
</dbReference>
<dbReference type="SMR" id="Q8D233"/>
<dbReference type="STRING" id="36870.gene:10369030"/>
<dbReference type="KEGG" id="wbr:rpoB"/>
<dbReference type="eggNOG" id="COG0085">
    <property type="taxonomic scope" value="Bacteria"/>
</dbReference>
<dbReference type="HOGENOM" id="CLU_000524_4_3_6"/>
<dbReference type="OrthoDB" id="9803954at2"/>
<dbReference type="Proteomes" id="UP000000562">
    <property type="component" value="Chromosome"/>
</dbReference>
<dbReference type="GO" id="GO:0000428">
    <property type="term" value="C:DNA-directed RNA polymerase complex"/>
    <property type="evidence" value="ECO:0007669"/>
    <property type="project" value="UniProtKB-KW"/>
</dbReference>
<dbReference type="GO" id="GO:0003677">
    <property type="term" value="F:DNA binding"/>
    <property type="evidence" value="ECO:0007669"/>
    <property type="project" value="UniProtKB-UniRule"/>
</dbReference>
<dbReference type="GO" id="GO:0003899">
    <property type="term" value="F:DNA-directed RNA polymerase activity"/>
    <property type="evidence" value="ECO:0007669"/>
    <property type="project" value="UniProtKB-UniRule"/>
</dbReference>
<dbReference type="GO" id="GO:0032549">
    <property type="term" value="F:ribonucleoside binding"/>
    <property type="evidence" value="ECO:0007669"/>
    <property type="project" value="InterPro"/>
</dbReference>
<dbReference type="GO" id="GO:0006351">
    <property type="term" value="P:DNA-templated transcription"/>
    <property type="evidence" value="ECO:0007669"/>
    <property type="project" value="UniProtKB-UniRule"/>
</dbReference>
<dbReference type="CDD" id="cd00653">
    <property type="entry name" value="RNA_pol_B_RPB2"/>
    <property type="match status" value="1"/>
</dbReference>
<dbReference type="FunFam" id="2.40.270.10:FF:000003">
    <property type="entry name" value="DNA-directed RNA polymerase subunit beta"/>
    <property type="match status" value="1"/>
</dbReference>
<dbReference type="FunFam" id="2.40.270.10:FF:000004">
    <property type="entry name" value="DNA-directed RNA polymerase subunit beta"/>
    <property type="match status" value="1"/>
</dbReference>
<dbReference type="FunFam" id="2.40.50.100:FF:000006">
    <property type="entry name" value="DNA-directed RNA polymerase subunit beta"/>
    <property type="match status" value="1"/>
</dbReference>
<dbReference type="FunFam" id="2.40.50.150:FF:000001">
    <property type="entry name" value="DNA-directed RNA polymerase subunit beta"/>
    <property type="match status" value="1"/>
</dbReference>
<dbReference type="FunFam" id="3.90.1100.10:FF:000002">
    <property type="entry name" value="DNA-directed RNA polymerase subunit beta"/>
    <property type="match status" value="1"/>
</dbReference>
<dbReference type="FunFam" id="3.90.1110.10:FF:000001">
    <property type="entry name" value="DNA-directed RNA polymerase subunit beta"/>
    <property type="match status" value="1"/>
</dbReference>
<dbReference type="FunFam" id="3.90.1110.10:FF:000004">
    <property type="entry name" value="DNA-directed RNA polymerase subunit beta"/>
    <property type="match status" value="1"/>
</dbReference>
<dbReference type="FunFam" id="3.90.1800.10:FF:000001">
    <property type="entry name" value="DNA-directed RNA polymerase subunit beta"/>
    <property type="match status" value="1"/>
</dbReference>
<dbReference type="Gene3D" id="2.40.50.100">
    <property type="match status" value="1"/>
</dbReference>
<dbReference type="Gene3D" id="2.40.50.150">
    <property type="match status" value="1"/>
</dbReference>
<dbReference type="Gene3D" id="3.90.1100.10">
    <property type="match status" value="2"/>
</dbReference>
<dbReference type="Gene3D" id="2.30.150.10">
    <property type="entry name" value="DNA-directed RNA polymerase, beta subunit, external 1 domain"/>
    <property type="match status" value="1"/>
</dbReference>
<dbReference type="Gene3D" id="2.40.270.10">
    <property type="entry name" value="DNA-directed RNA polymerase, subunit 2, domain 6"/>
    <property type="match status" value="2"/>
</dbReference>
<dbReference type="Gene3D" id="3.90.1800.10">
    <property type="entry name" value="RNA polymerase alpha subunit dimerisation domain"/>
    <property type="match status" value="1"/>
</dbReference>
<dbReference type="Gene3D" id="3.90.1110.10">
    <property type="entry name" value="RNA polymerase Rpb2, domain 2"/>
    <property type="match status" value="2"/>
</dbReference>
<dbReference type="HAMAP" id="MF_01321">
    <property type="entry name" value="RNApol_bact_RpoB"/>
    <property type="match status" value="1"/>
</dbReference>
<dbReference type="InterPro" id="IPR042107">
    <property type="entry name" value="DNA-dir_RNA_pol_bsu_ext_1_sf"/>
</dbReference>
<dbReference type="InterPro" id="IPR019462">
    <property type="entry name" value="DNA-dir_RNA_pol_bsu_external_1"/>
</dbReference>
<dbReference type="InterPro" id="IPR015712">
    <property type="entry name" value="DNA-dir_RNA_pol_su2"/>
</dbReference>
<dbReference type="InterPro" id="IPR007120">
    <property type="entry name" value="DNA-dir_RNAP_su2_dom"/>
</dbReference>
<dbReference type="InterPro" id="IPR037033">
    <property type="entry name" value="DNA-dir_RNAP_su2_hyb_sf"/>
</dbReference>
<dbReference type="InterPro" id="IPR010243">
    <property type="entry name" value="RNA_pol_bsu_bac"/>
</dbReference>
<dbReference type="InterPro" id="IPR007121">
    <property type="entry name" value="RNA_pol_bsu_CS"/>
</dbReference>
<dbReference type="InterPro" id="IPR007644">
    <property type="entry name" value="RNA_pol_bsu_protrusion"/>
</dbReference>
<dbReference type="InterPro" id="IPR007642">
    <property type="entry name" value="RNA_pol_Rpb2_2"/>
</dbReference>
<dbReference type="InterPro" id="IPR037034">
    <property type="entry name" value="RNA_pol_Rpb2_2_sf"/>
</dbReference>
<dbReference type="InterPro" id="IPR007645">
    <property type="entry name" value="RNA_pol_Rpb2_3"/>
</dbReference>
<dbReference type="InterPro" id="IPR007641">
    <property type="entry name" value="RNA_pol_Rpb2_7"/>
</dbReference>
<dbReference type="InterPro" id="IPR014724">
    <property type="entry name" value="RNA_pol_RPB2_OB-fold"/>
</dbReference>
<dbReference type="NCBIfam" id="NF001616">
    <property type="entry name" value="PRK00405.1"/>
    <property type="match status" value="1"/>
</dbReference>
<dbReference type="NCBIfam" id="TIGR02013">
    <property type="entry name" value="rpoB"/>
    <property type="match status" value="1"/>
</dbReference>
<dbReference type="PANTHER" id="PTHR20856">
    <property type="entry name" value="DNA-DIRECTED RNA POLYMERASE I SUBUNIT 2"/>
    <property type="match status" value="1"/>
</dbReference>
<dbReference type="Pfam" id="PF04563">
    <property type="entry name" value="RNA_pol_Rpb2_1"/>
    <property type="match status" value="1"/>
</dbReference>
<dbReference type="Pfam" id="PF04561">
    <property type="entry name" value="RNA_pol_Rpb2_2"/>
    <property type="match status" value="2"/>
</dbReference>
<dbReference type="Pfam" id="PF04565">
    <property type="entry name" value="RNA_pol_Rpb2_3"/>
    <property type="match status" value="1"/>
</dbReference>
<dbReference type="Pfam" id="PF10385">
    <property type="entry name" value="RNA_pol_Rpb2_45"/>
    <property type="match status" value="1"/>
</dbReference>
<dbReference type="Pfam" id="PF00562">
    <property type="entry name" value="RNA_pol_Rpb2_6"/>
    <property type="match status" value="1"/>
</dbReference>
<dbReference type="Pfam" id="PF04560">
    <property type="entry name" value="RNA_pol_Rpb2_7"/>
    <property type="match status" value="1"/>
</dbReference>
<dbReference type="SUPFAM" id="SSF64484">
    <property type="entry name" value="beta and beta-prime subunits of DNA dependent RNA-polymerase"/>
    <property type="match status" value="1"/>
</dbReference>
<dbReference type="PROSITE" id="PS01166">
    <property type="entry name" value="RNA_POL_BETA"/>
    <property type="match status" value="1"/>
</dbReference>
<sequence length="1342" mass="151550">MVYSYTERKRIRKDFGKRPQVLDIPYLLAIQINSFKKFIEKDPEGLYGLEAAFKSIFPIKSYSGNAELKYISYRLGCSVFNVKECQTRGTTFSAPLRVILQLIIYCDESKHVVKNIKEQEVYMGEIPLMTDNGTFIINGTERVVVSQLHRSPGVFFDSDKGKTHSSGKVLYNARIIPYRGSWLDFEFDAKDHLFIRIDRRRKLPVTVLLKALNFSDGEILNIFFEKVNFFIRKKNLLMELIPKRLRGETALFDICENGITYIKKGRRITAKHIRNLENDKISQITVPFEYIIGKVSAKNYFDKKTEKPIITANTELTVDLMLNLFKSGYKSIETLFTNDLDHGSYISETLRIDSTTDKTSALIEIYRMMRPGEPPTKEAAENLFYNLFFSEDRYDLSSVGRMKFNKSLSINSSEGSSLLDKFDIIEVTKKLIDIRNGKGDVDDIDHLGNRRIRSVGEMAENQFRIGLVRVERAVKERLSLGDLDTIMPQDMINAKPISAAVKEFFGSSQLSQFMDQNNPLSEITHKRRISALGPGGLTRERAGFEVRDVHPTHYGRVCPIETPEGPNIGLINSLSVYARTNEYGFLETPYRCVLNGIVTNNIHYLSAIEEGKFIIAQANTNLDKNGYFINEFVTCRNKGESSLFNRNQVNYMDVSTQQIVSVGASLIPFLEHDDANRALMGANMQRQAVPTLMTEKPLIGTGMERAVAVDSGVTAVAKRGGIVQFLDSSKIIIKVNQEEIIKEKIGIDIYHLTKYVRSNQNTCINQTPCVCLNDVVERGDVLADGPSTDLGELALGQNMRIAFMPWNGYNFEDSMLVSEKVVHEDRFTTIHIQELACMSRDTKLGSEEITSDIPNVSETSLLKLDESGIVYIGAEVKGGDILVGKVTPKGETQLTPEEKLLRAIFGEKASDVKDSSLRVPNGVSGTVIDVEIFTRDGVKKDKRALEIEYMQIKEAKKDIYEELEIFKSSLKIQIEYFLKENNIEYDSLSELLKGNIKNLIFKNNNLNNIFEELINKFLRLKEEFEKKLEIKIKKITQGDDLAPGVLKIVKVYLAVKRQIQPGDKMAGRHGNKGVISKINPIEDMPYDENGVPVDMVLNPLGVPSRMNIGQILETHLGLAAKGIGNIIDNMLKNNKKIYKIKKFIQNAYNLGIGIRQKVELDHFSDKEIIKLANNLRKGMPIATPVFDGAQEIEIKELLKFSGNPESGQITLFDGQTGEKFDRPVTVGYMYMLKLNHLVDDKMHARSTGSYSLVTQQPLGGKAQFGGQRFGEMEVWALEAYGAAYSLQEMLTVKSDDVNGRTKMYKNIVDGSHLMEPGMPESFNVLLKEIRSLGINIELEENN</sequence>
<gene>
    <name evidence="1" type="primary">rpoB</name>
    <name type="ordered locus">WIGBR5220</name>
</gene>
<comment type="function">
    <text evidence="1">DNA-dependent RNA polymerase catalyzes the transcription of DNA into RNA using the four ribonucleoside triphosphates as substrates.</text>
</comment>
<comment type="catalytic activity">
    <reaction evidence="1">
        <text>RNA(n) + a ribonucleoside 5'-triphosphate = RNA(n+1) + diphosphate</text>
        <dbReference type="Rhea" id="RHEA:21248"/>
        <dbReference type="Rhea" id="RHEA-COMP:14527"/>
        <dbReference type="Rhea" id="RHEA-COMP:17342"/>
        <dbReference type="ChEBI" id="CHEBI:33019"/>
        <dbReference type="ChEBI" id="CHEBI:61557"/>
        <dbReference type="ChEBI" id="CHEBI:140395"/>
        <dbReference type="EC" id="2.7.7.6"/>
    </reaction>
</comment>
<comment type="subunit">
    <text evidence="1">The RNAP catalytic core consists of 2 alpha, 1 beta, 1 beta' and 1 omega subunit. When a sigma factor is associated with the core the holoenzyme is formed, which can initiate transcription.</text>
</comment>
<comment type="similarity">
    <text evidence="1">Belongs to the RNA polymerase beta chain family.</text>
</comment>
<protein>
    <recommendedName>
        <fullName evidence="1">DNA-directed RNA polymerase subunit beta</fullName>
        <shortName evidence="1">RNAP subunit beta</shortName>
        <ecNumber evidence="1">2.7.7.6</ecNumber>
    </recommendedName>
    <alternativeName>
        <fullName evidence="1">RNA polymerase subunit beta</fullName>
    </alternativeName>
    <alternativeName>
        <fullName evidence="1">Transcriptase subunit beta</fullName>
    </alternativeName>
</protein>